<comment type="subcellular location">
    <subcellularLocation>
        <location evidence="2">Cell inner membrane</location>
        <topology evidence="2">Multi-pass membrane protein</topology>
    </subcellularLocation>
</comment>
<comment type="similarity">
    <text evidence="2">Belongs to the major facilitator superfamily. Bcr/CmlA family.</text>
</comment>
<proteinExistence type="inferred from homology"/>
<dbReference type="EMBL" id="CP000087">
    <property type="protein sequence ID" value="ABE04937.1"/>
    <property type="molecule type" value="Genomic_DNA"/>
</dbReference>
<dbReference type="RefSeq" id="WP_011477522.1">
    <property type="nucleotide sequence ID" value="NC_007940.1"/>
</dbReference>
<dbReference type="SMR" id="Q1RI77"/>
<dbReference type="KEGG" id="rbe:RBE_0856"/>
<dbReference type="eggNOG" id="COG2814">
    <property type="taxonomic scope" value="Bacteria"/>
</dbReference>
<dbReference type="HOGENOM" id="CLU_001265_47_1_5"/>
<dbReference type="OrthoDB" id="9800416at2"/>
<dbReference type="Proteomes" id="UP000001951">
    <property type="component" value="Chromosome"/>
</dbReference>
<dbReference type="GO" id="GO:0005886">
    <property type="term" value="C:plasma membrane"/>
    <property type="evidence" value="ECO:0007669"/>
    <property type="project" value="UniProtKB-SubCell"/>
</dbReference>
<dbReference type="GO" id="GO:0042910">
    <property type="term" value="F:xenobiotic transmembrane transporter activity"/>
    <property type="evidence" value="ECO:0007669"/>
    <property type="project" value="InterPro"/>
</dbReference>
<dbReference type="GO" id="GO:1990961">
    <property type="term" value="P:xenobiotic detoxification by transmembrane export across the plasma membrane"/>
    <property type="evidence" value="ECO:0007669"/>
    <property type="project" value="InterPro"/>
</dbReference>
<dbReference type="CDD" id="cd17320">
    <property type="entry name" value="MFS_MdfA_MDR_like"/>
    <property type="match status" value="1"/>
</dbReference>
<dbReference type="Gene3D" id="1.20.1720.10">
    <property type="entry name" value="Multidrug resistance protein D"/>
    <property type="match status" value="1"/>
</dbReference>
<dbReference type="InterPro" id="IPR004812">
    <property type="entry name" value="Efflux_drug-R_Bcr/CmlA"/>
</dbReference>
<dbReference type="InterPro" id="IPR011701">
    <property type="entry name" value="MFS"/>
</dbReference>
<dbReference type="InterPro" id="IPR020846">
    <property type="entry name" value="MFS_dom"/>
</dbReference>
<dbReference type="InterPro" id="IPR036259">
    <property type="entry name" value="MFS_trans_sf"/>
</dbReference>
<dbReference type="InterPro" id="IPR005829">
    <property type="entry name" value="Sugar_transporter_CS"/>
</dbReference>
<dbReference type="NCBIfam" id="TIGR00710">
    <property type="entry name" value="efflux_Bcr_CflA"/>
    <property type="match status" value="1"/>
</dbReference>
<dbReference type="PANTHER" id="PTHR23502">
    <property type="entry name" value="MAJOR FACILITATOR SUPERFAMILY"/>
    <property type="match status" value="1"/>
</dbReference>
<dbReference type="PANTHER" id="PTHR23502:SF137">
    <property type="entry name" value="MAJOR FACILITATOR SUPERFAMILY (MFS) TRANSPORTER-RELATED"/>
    <property type="match status" value="1"/>
</dbReference>
<dbReference type="Pfam" id="PF07690">
    <property type="entry name" value="MFS_1"/>
    <property type="match status" value="1"/>
</dbReference>
<dbReference type="SUPFAM" id="SSF103473">
    <property type="entry name" value="MFS general substrate transporter"/>
    <property type="match status" value="1"/>
</dbReference>
<dbReference type="PROSITE" id="PS50850">
    <property type="entry name" value="MFS"/>
    <property type="match status" value="1"/>
</dbReference>
<dbReference type="PROSITE" id="PS00216">
    <property type="entry name" value="SUGAR_TRANSPORT_1"/>
    <property type="match status" value="1"/>
</dbReference>
<evidence type="ECO:0000255" key="1"/>
<evidence type="ECO:0000305" key="2"/>
<name>BCRH_RICBR</name>
<protein>
    <recommendedName>
        <fullName>Uncharacterized transporter RBE_0856</fullName>
    </recommendedName>
</protein>
<gene>
    <name type="ordered locus">RBE_0856</name>
</gene>
<organism>
    <name type="scientific">Rickettsia bellii (strain RML369-C)</name>
    <dbReference type="NCBI Taxonomy" id="336407"/>
    <lineage>
        <taxon>Bacteria</taxon>
        <taxon>Pseudomonadati</taxon>
        <taxon>Pseudomonadota</taxon>
        <taxon>Alphaproteobacteria</taxon>
        <taxon>Rickettsiales</taxon>
        <taxon>Rickettsiaceae</taxon>
        <taxon>Rickettsieae</taxon>
        <taxon>Rickettsia</taxon>
        <taxon>belli group</taxon>
    </lineage>
</organism>
<sequence length="404" mass="44841">MKIIAKIPAWMLLCLFTLSPITETIYTSGLPSITEYFNTDGSTTQITSSLYYLGFALGILTLGRLSDIYGRRPVVLFGLCIYAISSIISIFAPNIETLMLARFVQAFGVSVGSVIGQAMARDSYQGSELSYVYASLSPWLLFIPSLGSSIGGYIIEYSSWHYTFVFFSLTGTVLLTLYCKILPETNPYINFSQTSKYFEVLKVVIRDKSLWLYAFIIGAFNGIYYGFYIEAPFIFIDKMKVAPSFYGKLAFLLSFAGIFGGFLGGYLIKKRHIHDQKVMILGLVFSVIGCSLLAIDALILQDKEVGQNIAVIMMFAPMMLHMVGHNLLIPMTLRYALEDYAKVTGTAGSVFGAIYYVLIAAVTFLVSKLHSDTIGNFALLFLVLSVSSAAAFYYILILYKKKLT</sequence>
<accession>Q1RI77</accession>
<keyword id="KW-0997">Cell inner membrane</keyword>
<keyword id="KW-1003">Cell membrane</keyword>
<keyword id="KW-0472">Membrane</keyword>
<keyword id="KW-0812">Transmembrane</keyword>
<keyword id="KW-1133">Transmembrane helix</keyword>
<keyword id="KW-0813">Transport</keyword>
<reference key="1">
    <citation type="journal article" date="2006" name="PLoS Genet.">
        <title>Genome sequence of Rickettsia bellii illuminates the role of amoebae in gene exchanges between intracellular pathogens.</title>
        <authorList>
            <person name="Ogata H."/>
            <person name="La Scola B."/>
            <person name="Audic S."/>
            <person name="Renesto P."/>
            <person name="Blanc G."/>
            <person name="Robert C."/>
            <person name="Fournier P.-E."/>
            <person name="Claverie J.-M."/>
            <person name="Raoult D."/>
        </authorList>
    </citation>
    <scope>NUCLEOTIDE SEQUENCE [LARGE SCALE GENOMIC DNA]</scope>
    <source>
        <strain>RML369-C</strain>
    </source>
</reference>
<feature type="chain" id="PRO_0000281081" description="Uncharacterized transporter RBE_0856">
    <location>
        <begin position="1"/>
        <end position="404"/>
    </location>
</feature>
<feature type="transmembrane region" description="Helical" evidence="1">
    <location>
        <begin position="3"/>
        <end position="23"/>
    </location>
</feature>
<feature type="transmembrane region" description="Helical" evidence="1">
    <location>
        <begin position="43"/>
        <end position="63"/>
    </location>
</feature>
<feature type="transmembrane region" description="Helical" evidence="1">
    <location>
        <begin position="73"/>
        <end position="93"/>
    </location>
</feature>
<feature type="transmembrane region" description="Helical" evidence="1">
    <location>
        <begin position="95"/>
        <end position="115"/>
    </location>
</feature>
<feature type="transmembrane region" description="Helical" evidence="1">
    <location>
        <begin position="135"/>
        <end position="155"/>
    </location>
</feature>
<feature type="transmembrane region" description="Helical" evidence="1">
    <location>
        <begin position="162"/>
        <end position="182"/>
    </location>
</feature>
<feature type="transmembrane region" description="Helical" evidence="1">
    <location>
        <begin position="216"/>
        <end position="236"/>
    </location>
</feature>
<feature type="transmembrane region" description="Helical" evidence="1">
    <location>
        <begin position="248"/>
        <end position="268"/>
    </location>
</feature>
<feature type="transmembrane region" description="Helical" evidence="1">
    <location>
        <begin position="280"/>
        <end position="300"/>
    </location>
</feature>
<feature type="transmembrane region" description="Helical" evidence="1">
    <location>
        <begin position="309"/>
        <end position="329"/>
    </location>
</feature>
<feature type="transmembrane region" description="Helical" evidence="1">
    <location>
        <begin position="346"/>
        <end position="366"/>
    </location>
</feature>
<feature type="transmembrane region" description="Helical" evidence="1">
    <location>
        <begin position="377"/>
        <end position="397"/>
    </location>
</feature>